<organism>
    <name type="scientific">Mus musculus</name>
    <name type="common">Mouse</name>
    <dbReference type="NCBI Taxonomy" id="10090"/>
    <lineage>
        <taxon>Eukaryota</taxon>
        <taxon>Metazoa</taxon>
        <taxon>Chordata</taxon>
        <taxon>Craniata</taxon>
        <taxon>Vertebrata</taxon>
        <taxon>Euteleostomi</taxon>
        <taxon>Mammalia</taxon>
        <taxon>Eutheria</taxon>
        <taxon>Euarchontoglires</taxon>
        <taxon>Glires</taxon>
        <taxon>Rodentia</taxon>
        <taxon>Myomorpha</taxon>
        <taxon>Muroidea</taxon>
        <taxon>Muridae</taxon>
        <taxon>Murinae</taxon>
        <taxon>Mus</taxon>
        <taxon>Mus</taxon>
    </lineage>
</organism>
<reference key="1">
    <citation type="submission" date="2004-11" db="EMBL/GenBank/DDBJ databases">
        <title>Comparative genomic analysis of the paired immunoglobin-like receptor locus at 7q22: duplications, conversions, inversions and the birth of new genes.</title>
        <authorList>
            <person name="Wilson M.D."/>
            <person name="McKinnel L."/>
            <person name="Danby A."/>
            <person name="Schnupf P."/>
            <person name="Hunt P."/>
            <person name="Martindale D."/>
            <person name="Koop B.F."/>
        </authorList>
    </citation>
    <scope>NUCLEOTIDE SEQUENCE [GENOMIC DNA]</scope>
    <source>
        <strain>129/Sv</strain>
    </source>
</reference>
<reference key="2">
    <citation type="journal article" date="2005" name="Science">
        <title>The transcriptional landscape of the mammalian genome.</title>
        <authorList>
            <person name="Carninci P."/>
            <person name="Kasukawa T."/>
            <person name="Katayama S."/>
            <person name="Gough J."/>
            <person name="Frith M.C."/>
            <person name="Maeda N."/>
            <person name="Oyama R."/>
            <person name="Ravasi T."/>
            <person name="Lenhard B."/>
            <person name="Wells C."/>
            <person name="Kodzius R."/>
            <person name="Shimokawa K."/>
            <person name="Bajic V.B."/>
            <person name="Brenner S.E."/>
            <person name="Batalov S."/>
            <person name="Forrest A.R."/>
            <person name="Zavolan M."/>
            <person name="Davis M.J."/>
            <person name="Wilming L.G."/>
            <person name="Aidinis V."/>
            <person name="Allen J.E."/>
            <person name="Ambesi-Impiombato A."/>
            <person name="Apweiler R."/>
            <person name="Aturaliya R.N."/>
            <person name="Bailey T.L."/>
            <person name="Bansal M."/>
            <person name="Baxter L."/>
            <person name="Beisel K.W."/>
            <person name="Bersano T."/>
            <person name="Bono H."/>
            <person name="Chalk A.M."/>
            <person name="Chiu K.P."/>
            <person name="Choudhary V."/>
            <person name="Christoffels A."/>
            <person name="Clutterbuck D.R."/>
            <person name="Crowe M.L."/>
            <person name="Dalla E."/>
            <person name="Dalrymple B.P."/>
            <person name="de Bono B."/>
            <person name="Della Gatta G."/>
            <person name="di Bernardo D."/>
            <person name="Down T."/>
            <person name="Engstrom P."/>
            <person name="Fagiolini M."/>
            <person name="Faulkner G."/>
            <person name="Fletcher C.F."/>
            <person name="Fukushima T."/>
            <person name="Furuno M."/>
            <person name="Futaki S."/>
            <person name="Gariboldi M."/>
            <person name="Georgii-Hemming P."/>
            <person name="Gingeras T.R."/>
            <person name="Gojobori T."/>
            <person name="Green R.E."/>
            <person name="Gustincich S."/>
            <person name="Harbers M."/>
            <person name="Hayashi Y."/>
            <person name="Hensch T.K."/>
            <person name="Hirokawa N."/>
            <person name="Hill D."/>
            <person name="Huminiecki L."/>
            <person name="Iacono M."/>
            <person name="Ikeo K."/>
            <person name="Iwama A."/>
            <person name="Ishikawa T."/>
            <person name="Jakt M."/>
            <person name="Kanapin A."/>
            <person name="Katoh M."/>
            <person name="Kawasawa Y."/>
            <person name="Kelso J."/>
            <person name="Kitamura H."/>
            <person name="Kitano H."/>
            <person name="Kollias G."/>
            <person name="Krishnan S.P."/>
            <person name="Kruger A."/>
            <person name="Kummerfeld S.K."/>
            <person name="Kurochkin I.V."/>
            <person name="Lareau L.F."/>
            <person name="Lazarevic D."/>
            <person name="Lipovich L."/>
            <person name="Liu J."/>
            <person name="Liuni S."/>
            <person name="McWilliam S."/>
            <person name="Madan Babu M."/>
            <person name="Madera M."/>
            <person name="Marchionni L."/>
            <person name="Matsuda H."/>
            <person name="Matsuzawa S."/>
            <person name="Miki H."/>
            <person name="Mignone F."/>
            <person name="Miyake S."/>
            <person name="Morris K."/>
            <person name="Mottagui-Tabar S."/>
            <person name="Mulder N."/>
            <person name="Nakano N."/>
            <person name="Nakauchi H."/>
            <person name="Ng P."/>
            <person name="Nilsson R."/>
            <person name="Nishiguchi S."/>
            <person name="Nishikawa S."/>
            <person name="Nori F."/>
            <person name="Ohara O."/>
            <person name="Okazaki Y."/>
            <person name="Orlando V."/>
            <person name="Pang K.C."/>
            <person name="Pavan W.J."/>
            <person name="Pavesi G."/>
            <person name="Pesole G."/>
            <person name="Petrovsky N."/>
            <person name="Piazza S."/>
            <person name="Reed J."/>
            <person name="Reid J.F."/>
            <person name="Ring B.Z."/>
            <person name="Ringwald M."/>
            <person name="Rost B."/>
            <person name="Ruan Y."/>
            <person name="Salzberg S.L."/>
            <person name="Sandelin A."/>
            <person name="Schneider C."/>
            <person name="Schoenbach C."/>
            <person name="Sekiguchi K."/>
            <person name="Semple C.A."/>
            <person name="Seno S."/>
            <person name="Sessa L."/>
            <person name="Sheng Y."/>
            <person name="Shibata Y."/>
            <person name="Shimada H."/>
            <person name="Shimada K."/>
            <person name="Silva D."/>
            <person name="Sinclair B."/>
            <person name="Sperling S."/>
            <person name="Stupka E."/>
            <person name="Sugiura K."/>
            <person name="Sultana R."/>
            <person name="Takenaka Y."/>
            <person name="Taki K."/>
            <person name="Tammoja K."/>
            <person name="Tan S.L."/>
            <person name="Tang S."/>
            <person name="Taylor M.S."/>
            <person name="Tegner J."/>
            <person name="Teichmann S.A."/>
            <person name="Ueda H.R."/>
            <person name="van Nimwegen E."/>
            <person name="Verardo R."/>
            <person name="Wei C.L."/>
            <person name="Yagi K."/>
            <person name="Yamanishi H."/>
            <person name="Zabarovsky E."/>
            <person name="Zhu S."/>
            <person name="Zimmer A."/>
            <person name="Hide W."/>
            <person name="Bult C."/>
            <person name="Grimmond S.M."/>
            <person name="Teasdale R.D."/>
            <person name="Liu E.T."/>
            <person name="Brusic V."/>
            <person name="Quackenbush J."/>
            <person name="Wahlestedt C."/>
            <person name="Mattick J.S."/>
            <person name="Hume D.A."/>
            <person name="Kai C."/>
            <person name="Sasaki D."/>
            <person name="Tomaru Y."/>
            <person name="Fukuda S."/>
            <person name="Kanamori-Katayama M."/>
            <person name="Suzuki M."/>
            <person name="Aoki J."/>
            <person name="Arakawa T."/>
            <person name="Iida J."/>
            <person name="Imamura K."/>
            <person name="Itoh M."/>
            <person name="Kato T."/>
            <person name="Kawaji H."/>
            <person name="Kawagashira N."/>
            <person name="Kawashima T."/>
            <person name="Kojima M."/>
            <person name="Kondo S."/>
            <person name="Konno H."/>
            <person name="Nakano K."/>
            <person name="Ninomiya N."/>
            <person name="Nishio T."/>
            <person name="Okada M."/>
            <person name="Plessy C."/>
            <person name="Shibata K."/>
            <person name="Shiraki T."/>
            <person name="Suzuki S."/>
            <person name="Tagami M."/>
            <person name="Waki K."/>
            <person name="Watahiki A."/>
            <person name="Okamura-Oho Y."/>
            <person name="Suzuki H."/>
            <person name="Kawai J."/>
            <person name="Hayashizaki Y."/>
        </authorList>
    </citation>
    <scope>NUCLEOTIDE SEQUENCE [LARGE SCALE MRNA]</scope>
    <source>
        <strain>C57BL/6J</strain>
        <tissue>Bone</tissue>
    </source>
</reference>
<comment type="function">
    <text>Paired receptors consist of highly related activating and inhibitory receptors and are widely involved in the regulation of the immune system. PILRB2 is probably a cellular signaling activating receptor that associates with ITAM-bearing adapter molecules on the cell surface.</text>
</comment>
<comment type="subcellular location">
    <subcellularLocation>
        <location evidence="2">Membrane</location>
        <topology evidence="2">Single-pass type I membrane protein</topology>
    </subcellularLocation>
</comment>
<keyword id="KW-0325">Glycoprotein</keyword>
<keyword id="KW-0472">Membrane</keyword>
<keyword id="KW-1185">Reference proteome</keyword>
<keyword id="KW-0732">Signal</keyword>
<keyword id="KW-0812">Transmembrane</keyword>
<keyword id="KW-1133">Transmembrane helix</keyword>
<accession>Q2YFS1</accession>
<feature type="signal peptide" evidence="1">
    <location>
        <begin position="1"/>
        <end position="31"/>
    </location>
</feature>
<feature type="chain" id="PRO_0000226825" description="Paired immunoglobulin-like type 2 receptor beta-2">
    <location>
        <begin position="32"/>
        <end position="225"/>
    </location>
</feature>
<feature type="topological domain" description="Extracellular" evidence="1">
    <location>
        <begin position="32"/>
        <end position="195"/>
    </location>
</feature>
<feature type="transmembrane region" description="Helical" evidence="1">
    <location>
        <begin position="196"/>
        <end position="216"/>
    </location>
</feature>
<feature type="topological domain" description="Cytoplasmic" evidence="1">
    <location>
        <begin position="217"/>
        <end position="225"/>
    </location>
</feature>
<feature type="glycosylation site" description="N-linked (GlcNAc...) asparagine" evidence="1">
    <location>
        <position position="90"/>
    </location>
</feature>
<feature type="glycosylation site" description="N-linked (GlcNAc...) asparagine" evidence="1">
    <location>
        <position position="107"/>
    </location>
</feature>
<feature type="glycosylation site" description="N-linked (GlcNAc...) asparagine" evidence="1">
    <location>
        <position position="160"/>
    </location>
</feature>
<protein>
    <recommendedName>
        <fullName>Paired immunoglobulin-like type 2 receptor beta-2</fullName>
    </recommendedName>
    <alternativeName>
        <fullName>Activating receptor PILR-beta-2</fullName>
    </alternativeName>
</protein>
<name>PILB2_MOUSE</name>
<evidence type="ECO:0000255" key="1"/>
<evidence type="ECO:0000305" key="2"/>
<sequence length="225" mass="25513">MALLISLPGETPAMAQILLLLSSACLHAGNSARSNGGNDFGVNQPERCSGVQGGSIDIPFSFYFPWKLAKDPQMSIAWRWKDFFGHFIYNSSMPFIHEHFKGRLILNWTQGQTSGVLRILNFKESDQTWYFCRVFLQTTEGIKFWQSLPGTQLTLTQALNTTMRSPFIVTSEFTTAGLEHTRDKRNPSLMNLGAMVTMLLAKVVVIILVYGWMIFLRWKQRPDPA</sequence>
<gene>
    <name type="primary">Pilrb2</name>
</gene>
<dbReference type="EMBL" id="AY823670">
    <property type="protein sequence ID" value="AAX39496.1"/>
    <property type="molecule type" value="Genomic_DNA"/>
</dbReference>
<dbReference type="EMBL" id="AK036467">
    <property type="protein sequence ID" value="BAC29442.1"/>
    <property type="molecule type" value="mRNA"/>
</dbReference>
<dbReference type="CCDS" id="CCDS51676.1"/>
<dbReference type="RefSeq" id="NP_001020103.1">
    <property type="nucleotide sequence ID" value="NM_001024932.2"/>
</dbReference>
<dbReference type="SMR" id="Q2YFS1"/>
<dbReference type="FunCoup" id="Q2YFS1">
    <property type="interactions" value="21"/>
</dbReference>
<dbReference type="STRING" id="10090.ENSMUSP00000131233"/>
<dbReference type="GlyCosmos" id="Q2YFS1">
    <property type="glycosylation" value="3 sites, No reported glycans"/>
</dbReference>
<dbReference type="GlyGen" id="Q2YFS1">
    <property type="glycosylation" value="3 sites"/>
</dbReference>
<dbReference type="PaxDb" id="10090-ENSMUSP00000131233"/>
<dbReference type="ProteomicsDB" id="289896"/>
<dbReference type="Ensembl" id="ENSMUST00000164886.2">
    <property type="protein sequence ID" value="ENSMUSP00000131233.2"/>
    <property type="gene ID" value="ENSMUSG00000066682.12"/>
</dbReference>
<dbReference type="GeneID" id="545812"/>
<dbReference type="UCSC" id="uc009aee.1">
    <property type="organism name" value="mouse"/>
</dbReference>
<dbReference type="AGR" id="MGI:2450535"/>
<dbReference type="CTD" id="545812"/>
<dbReference type="MGI" id="MGI:2450535">
    <property type="gene designation" value="Pilrb2"/>
</dbReference>
<dbReference type="VEuPathDB" id="HostDB:ENSMUSG00000066682"/>
<dbReference type="eggNOG" id="ENOG502SUHR">
    <property type="taxonomic scope" value="Eukaryota"/>
</dbReference>
<dbReference type="GeneTree" id="ENSGT00390000008831"/>
<dbReference type="InParanoid" id="Q2YFS1"/>
<dbReference type="OMA" id="VIISWRW"/>
<dbReference type="OrthoDB" id="6152887at2759"/>
<dbReference type="PhylomeDB" id="Q2YFS1"/>
<dbReference type="TreeFam" id="TF338478"/>
<dbReference type="BioGRID-ORCS" id="545812">
    <property type="hits" value="1 hit in 47 CRISPR screens"/>
</dbReference>
<dbReference type="PRO" id="PR:Q2YFS1"/>
<dbReference type="Proteomes" id="UP000000589">
    <property type="component" value="Chromosome 5"/>
</dbReference>
<dbReference type="RNAct" id="Q2YFS1">
    <property type="molecule type" value="protein"/>
</dbReference>
<dbReference type="Bgee" id="ENSMUSG00000066682">
    <property type="expression patterns" value="Expressed in granulocyte and 39 other cell types or tissues"/>
</dbReference>
<dbReference type="ExpressionAtlas" id="Q2YFS1">
    <property type="expression patterns" value="baseline and differential"/>
</dbReference>
<dbReference type="GO" id="GO:0071944">
    <property type="term" value="C:cell periphery"/>
    <property type="evidence" value="ECO:0007669"/>
    <property type="project" value="UniProtKB-ARBA"/>
</dbReference>
<dbReference type="GO" id="GO:0016020">
    <property type="term" value="C:membrane"/>
    <property type="evidence" value="ECO:0007669"/>
    <property type="project" value="UniProtKB-SubCell"/>
</dbReference>
<dbReference type="FunFam" id="2.60.40.10:FF:000753">
    <property type="entry name" value="Paired immunoglobulin-like type 2 receptor alpha"/>
    <property type="match status" value="1"/>
</dbReference>
<dbReference type="Gene3D" id="2.60.40.10">
    <property type="entry name" value="Immunoglobulins"/>
    <property type="match status" value="1"/>
</dbReference>
<dbReference type="InterPro" id="IPR036179">
    <property type="entry name" value="Ig-like_dom_sf"/>
</dbReference>
<dbReference type="InterPro" id="IPR013783">
    <property type="entry name" value="Ig-like_fold"/>
</dbReference>
<dbReference type="InterPro" id="IPR051694">
    <property type="entry name" value="Immunoregulatory_rcpt-like"/>
</dbReference>
<dbReference type="PANTHER" id="PTHR15549">
    <property type="entry name" value="PAIRED IMMUNOGLOBULIN-LIKE TYPE 2 RECEPTOR"/>
    <property type="match status" value="1"/>
</dbReference>
<dbReference type="PANTHER" id="PTHR15549:SF15">
    <property type="entry name" value="PAIRED IMMUNOGLOBULIN-LIKE TYPE 2 RECEPTOR BETA-RELATED"/>
    <property type="match status" value="1"/>
</dbReference>
<dbReference type="SUPFAM" id="SSF48726">
    <property type="entry name" value="Immunoglobulin"/>
    <property type="match status" value="1"/>
</dbReference>
<proteinExistence type="evidence at transcript level"/>